<organism>
    <name type="scientific">Streptococcus pneumoniae (strain ATCC 700669 / Spain 23F-1)</name>
    <dbReference type="NCBI Taxonomy" id="561276"/>
    <lineage>
        <taxon>Bacteria</taxon>
        <taxon>Bacillati</taxon>
        <taxon>Bacillota</taxon>
        <taxon>Bacilli</taxon>
        <taxon>Lactobacillales</taxon>
        <taxon>Streptococcaceae</taxon>
        <taxon>Streptococcus</taxon>
    </lineage>
</organism>
<dbReference type="EC" id="3.1.11.6" evidence="1"/>
<dbReference type="EMBL" id="FM211187">
    <property type="protein sequence ID" value="CAR68917.1"/>
    <property type="molecule type" value="Genomic_DNA"/>
</dbReference>
<dbReference type="RefSeq" id="WP_000417468.1">
    <property type="nucleotide sequence ID" value="NC_011900.1"/>
</dbReference>
<dbReference type="SMR" id="B8ZQ76"/>
<dbReference type="KEGG" id="sne:SPN23F11070"/>
<dbReference type="HOGENOM" id="CLU_023625_3_1_9"/>
<dbReference type="GO" id="GO:0005737">
    <property type="term" value="C:cytoplasm"/>
    <property type="evidence" value="ECO:0007669"/>
    <property type="project" value="UniProtKB-SubCell"/>
</dbReference>
<dbReference type="GO" id="GO:0009318">
    <property type="term" value="C:exodeoxyribonuclease VII complex"/>
    <property type="evidence" value="ECO:0007669"/>
    <property type="project" value="InterPro"/>
</dbReference>
<dbReference type="GO" id="GO:0008855">
    <property type="term" value="F:exodeoxyribonuclease VII activity"/>
    <property type="evidence" value="ECO:0007669"/>
    <property type="project" value="UniProtKB-UniRule"/>
</dbReference>
<dbReference type="GO" id="GO:0003676">
    <property type="term" value="F:nucleic acid binding"/>
    <property type="evidence" value="ECO:0007669"/>
    <property type="project" value="InterPro"/>
</dbReference>
<dbReference type="GO" id="GO:0006308">
    <property type="term" value="P:DNA catabolic process"/>
    <property type="evidence" value="ECO:0007669"/>
    <property type="project" value="UniProtKB-UniRule"/>
</dbReference>
<dbReference type="CDD" id="cd04489">
    <property type="entry name" value="ExoVII_LU_OBF"/>
    <property type="match status" value="1"/>
</dbReference>
<dbReference type="HAMAP" id="MF_00378">
    <property type="entry name" value="Exonuc_7_L"/>
    <property type="match status" value="1"/>
</dbReference>
<dbReference type="InterPro" id="IPR003753">
    <property type="entry name" value="Exonuc_VII_L"/>
</dbReference>
<dbReference type="InterPro" id="IPR020579">
    <property type="entry name" value="Exonuc_VII_lsu_C"/>
</dbReference>
<dbReference type="InterPro" id="IPR025824">
    <property type="entry name" value="OB-fold_nuc-bd_dom"/>
</dbReference>
<dbReference type="NCBIfam" id="TIGR00237">
    <property type="entry name" value="xseA"/>
    <property type="match status" value="1"/>
</dbReference>
<dbReference type="PANTHER" id="PTHR30008">
    <property type="entry name" value="EXODEOXYRIBONUCLEASE 7 LARGE SUBUNIT"/>
    <property type="match status" value="1"/>
</dbReference>
<dbReference type="PANTHER" id="PTHR30008:SF0">
    <property type="entry name" value="EXODEOXYRIBONUCLEASE 7 LARGE SUBUNIT"/>
    <property type="match status" value="1"/>
</dbReference>
<dbReference type="Pfam" id="PF02601">
    <property type="entry name" value="Exonuc_VII_L"/>
    <property type="match status" value="1"/>
</dbReference>
<dbReference type="Pfam" id="PF13742">
    <property type="entry name" value="tRNA_anti_2"/>
    <property type="match status" value="1"/>
</dbReference>
<reference key="1">
    <citation type="journal article" date="2009" name="J. Bacteriol.">
        <title>Role of conjugative elements in the evolution of the multidrug-resistant pandemic clone Streptococcus pneumoniae Spain23F ST81.</title>
        <authorList>
            <person name="Croucher N.J."/>
            <person name="Walker D."/>
            <person name="Romero P."/>
            <person name="Lennard N."/>
            <person name="Paterson G.K."/>
            <person name="Bason N.C."/>
            <person name="Mitchell A.M."/>
            <person name="Quail M.A."/>
            <person name="Andrew P.W."/>
            <person name="Parkhill J."/>
            <person name="Bentley S.D."/>
            <person name="Mitchell T.J."/>
        </authorList>
    </citation>
    <scope>NUCLEOTIDE SEQUENCE [LARGE SCALE GENOMIC DNA]</scope>
    <source>
        <strain>ATCC 700669 / Spain 23F-1</strain>
    </source>
</reference>
<comment type="function">
    <text evidence="1">Bidirectionally degrades single-stranded DNA into large acid-insoluble oligonucleotides, which are then degraded further into small acid-soluble oligonucleotides.</text>
</comment>
<comment type="catalytic activity">
    <reaction evidence="1">
        <text>Exonucleolytic cleavage in either 5'- to 3'- or 3'- to 5'-direction to yield nucleoside 5'-phosphates.</text>
        <dbReference type="EC" id="3.1.11.6"/>
    </reaction>
</comment>
<comment type="subunit">
    <text evidence="1">Heterooligomer composed of large and small subunits.</text>
</comment>
<comment type="subcellular location">
    <subcellularLocation>
        <location evidence="1">Cytoplasm</location>
    </subcellularLocation>
</comment>
<comment type="similarity">
    <text evidence="1">Belongs to the XseA family.</text>
</comment>
<keyword id="KW-0963">Cytoplasm</keyword>
<keyword id="KW-0269">Exonuclease</keyword>
<keyword id="KW-0378">Hydrolase</keyword>
<keyword id="KW-0540">Nuclease</keyword>
<accession>B8ZQ76</accession>
<name>EX7L_STRPJ</name>
<protein>
    <recommendedName>
        <fullName evidence="1">Exodeoxyribonuclease 7 large subunit</fullName>
        <ecNumber evidence="1">3.1.11.6</ecNumber>
    </recommendedName>
    <alternativeName>
        <fullName evidence="1">Exodeoxyribonuclease VII large subunit</fullName>
        <shortName evidence="1">Exonuclease VII large subunit</shortName>
    </alternativeName>
</protein>
<evidence type="ECO:0000255" key="1">
    <source>
        <dbReference type="HAMAP-Rule" id="MF_00378"/>
    </source>
</evidence>
<gene>
    <name evidence="1" type="primary">xseA</name>
    <name type="ordered locus">SPN23F11070</name>
</gene>
<feature type="chain" id="PRO_1000200682" description="Exodeoxyribonuclease 7 large subunit">
    <location>
        <begin position="1"/>
        <end position="446"/>
    </location>
</feature>
<sequence>MEKYLSVTTLTKYLKMKFDKDPYLERVYLTGQVSNFRKRPTHQYFSLKDDHAVIQATIWSGIYQKLGFDLEEGMKINVIGRVQVYEPSGSYSIIIEKAEPDGVGALAIQFEQLKKKLTEEGLFQERFKQALPQFSKRIGVVTSRSGAVIRDIITTVSRRFPGVDILLYPTKVQGEGAAEEIARNIARANQRDDLDLLIIGRGGGSIEDLWAFNEEIVVRAIFESRLPVISSVGHETDVTLADFVADRRAATPTAAAELATPVTKLDVLTHLQNQEKRMATAVRNVLSKKQEALKKCSQSVIFRQPERLYDGYLQRLDQLQLRLKQSLRTRISDNKQLVQARTHQLVQLSPVTKIQRYQDRLGQLDKLLGSQMALVYDAKVAEAKRLSEALLMLDTSRIVARGYAIVKKEESIVDSVESLKKKDQVTLLMRDGQVELEVKDVKTKEI</sequence>
<proteinExistence type="inferred from homology"/>